<keyword id="KW-0002">3D-structure</keyword>
<keyword id="KW-0413">Isomerase</keyword>
<keyword id="KW-1185">Reference proteome</keyword>
<reference key="1">
    <citation type="journal article" date="1995" name="Science">
        <title>Whole-genome random sequencing and assembly of Haemophilus influenzae Rd.</title>
        <authorList>
            <person name="Fleischmann R.D."/>
            <person name="Adams M.D."/>
            <person name="White O."/>
            <person name="Clayton R.A."/>
            <person name="Kirkness E.F."/>
            <person name="Kerlavage A.R."/>
            <person name="Bult C.J."/>
            <person name="Tomb J.-F."/>
            <person name="Dougherty B.A."/>
            <person name="Merrick J.M."/>
            <person name="McKenney K."/>
            <person name="Sutton G.G."/>
            <person name="FitzHugh W."/>
            <person name="Fields C.A."/>
            <person name="Gocayne J.D."/>
            <person name="Scott J.D."/>
            <person name="Shirley R."/>
            <person name="Liu L.-I."/>
            <person name="Glodek A."/>
            <person name="Kelley J.M."/>
            <person name="Weidman J.F."/>
            <person name="Phillips C.A."/>
            <person name="Spriggs T."/>
            <person name="Hedblom E."/>
            <person name="Cotton M.D."/>
            <person name="Utterback T.R."/>
            <person name="Hanna M.C."/>
            <person name="Nguyen D.T."/>
            <person name="Saudek D.M."/>
            <person name="Brandon R.C."/>
            <person name="Fine L.D."/>
            <person name="Fritchman J.L."/>
            <person name="Fuhrmann J.L."/>
            <person name="Geoghagen N.S.M."/>
            <person name="Gnehm C.L."/>
            <person name="McDonald L.A."/>
            <person name="Small K.V."/>
            <person name="Fraser C.M."/>
            <person name="Smith H.O."/>
            <person name="Venter J.C."/>
        </authorList>
    </citation>
    <scope>NUCLEOTIDE SEQUENCE [LARGE SCALE GENOMIC DNA]</scope>
    <source>
        <strain>ATCC 51907 / DSM 11121 / KW20 / Rd</strain>
    </source>
</reference>
<reference key="2">
    <citation type="journal article" date="2000" name="Electrophoresis">
        <title>Two-dimensional map of the proteome of Haemophilus influenzae.</title>
        <authorList>
            <person name="Langen H."/>
            <person name="Takacs B."/>
            <person name="Evers S."/>
            <person name="Berndt P."/>
            <person name="Lahm H.W."/>
            <person name="Wipf B."/>
            <person name="Gray C."/>
            <person name="Fountoulakis M."/>
        </authorList>
    </citation>
    <scope>IDENTIFICATION BY MASS SPECTROMETRY</scope>
    <source>
        <strain>ATCC 51907 / DSM 11121 / KW20 / Rd</strain>
    </source>
</reference>
<reference key="3">
    <citation type="submission" date="2002-06" db="PDB data bank">
        <title>D-ribose-5-phosphate isomerase, IR21.</title>
        <authorList>
            <person name="Das K."/>
            <person name="Xiao R."/>
            <person name="Acton T."/>
            <person name="Montelione G."/>
            <person name="Arnold E."/>
        </authorList>
    </citation>
    <scope>X-RAY CRYSTALLOGRAPHY (1.90 ANGSTROMS) IN COMPLEX WITH SUBSTRATE</scope>
    <scope>SUBUNIT</scope>
</reference>
<organism>
    <name type="scientific">Haemophilus influenzae (strain ATCC 51907 / DSM 11121 / KW20 / Rd)</name>
    <dbReference type="NCBI Taxonomy" id="71421"/>
    <lineage>
        <taxon>Bacteria</taxon>
        <taxon>Pseudomonadati</taxon>
        <taxon>Pseudomonadota</taxon>
        <taxon>Gammaproteobacteria</taxon>
        <taxon>Pasteurellales</taxon>
        <taxon>Pasteurellaceae</taxon>
        <taxon>Haemophilus</taxon>
    </lineage>
</organism>
<gene>
    <name evidence="1" type="primary">rpiA</name>
    <name type="ordered locus">HI_0464</name>
</gene>
<sequence length="219" mass="23094">MNQLEMKKLAAQAALQYVKADTIVGVGSGSTVNCFIEALGTIKDKIQGAVAASKESEELLRKQGIEVFNANDVSSLDIYVDGADEINPQKMMIKGGGAALTREKIVAALAKKFICIVDSSKQVDVLGSTFPLPVEVIPMARSQVGRKLAALGGSPEYREGVVTDNGNVILDVHNFSILNPVEIEKELNNVAGVVTNGIFALRGADVVIVGTPEGAKVID</sequence>
<evidence type="ECO:0000255" key="1">
    <source>
        <dbReference type="HAMAP-Rule" id="MF_00170"/>
    </source>
</evidence>
<evidence type="ECO:0000269" key="2">
    <source ref="3"/>
</evidence>
<evidence type="ECO:0000305" key="3"/>
<evidence type="ECO:0007829" key="4">
    <source>
        <dbReference type="PDB" id="1M0S"/>
    </source>
</evidence>
<accession>P44725</accession>
<dbReference type="EC" id="5.3.1.6" evidence="1"/>
<dbReference type="EMBL" id="L42023">
    <property type="protein sequence ID" value="AAC22123.1"/>
    <property type="molecule type" value="Genomic_DNA"/>
</dbReference>
<dbReference type="PIR" id="B64153">
    <property type="entry name" value="B64153"/>
</dbReference>
<dbReference type="RefSeq" id="NP_438625.1">
    <property type="nucleotide sequence ID" value="NC_000907.1"/>
</dbReference>
<dbReference type="PDB" id="1M0S">
    <property type="method" value="X-ray"/>
    <property type="resolution" value="1.90 A"/>
    <property type="chains" value="A/B=1-219"/>
</dbReference>
<dbReference type="PDBsum" id="1M0S"/>
<dbReference type="SMR" id="P44725"/>
<dbReference type="STRING" id="71421.HI_0464"/>
<dbReference type="DrugBank" id="DB04272">
    <property type="generic name" value="Citric acid"/>
</dbReference>
<dbReference type="EnsemblBacteria" id="AAC22123">
    <property type="protein sequence ID" value="AAC22123"/>
    <property type="gene ID" value="HI_0464"/>
</dbReference>
<dbReference type="KEGG" id="hin:HI_0464"/>
<dbReference type="PATRIC" id="fig|71421.8.peg.484"/>
<dbReference type="eggNOG" id="COG0120">
    <property type="taxonomic scope" value="Bacteria"/>
</dbReference>
<dbReference type="HOGENOM" id="CLU_056590_1_1_6"/>
<dbReference type="OrthoDB" id="5870696at2"/>
<dbReference type="PhylomeDB" id="P44725"/>
<dbReference type="BioCyc" id="HINF71421:G1GJ1-480-MONOMER"/>
<dbReference type="UniPathway" id="UPA00115">
    <property type="reaction ID" value="UER00412"/>
</dbReference>
<dbReference type="EvolutionaryTrace" id="P44725"/>
<dbReference type="Proteomes" id="UP000000579">
    <property type="component" value="Chromosome"/>
</dbReference>
<dbReference type="GO" id="GO:0005829">
    <property type="term" value="C:cytosol"/>
    <property type="evidence" value="ECO:0000318"/>
    <property type="project" value="GO_Central"/>
</dbReference>
<dbReference type="GO" id="GO:0004751">
    <property type="term" value="F:ribose-5-phosphate isomerase activity"/>
    <property type="evidence" value="ECO:0000318"/>
    <property type="project" value="GO_Central"/>
</dbReference>
<dbReference type="GO" id="GO:0006014">
    <property type="term" value="P:D-ribose metabolic process"/>
    <property type="evidence" value="ECO:0000318"/>
    <property type="project" value="GO_Central"/>
</dbReference>
<dbReference type="GO" id="GO:0009052">
    <property type="term" value="P:pentose-phosphate shunt, non-oxidative branch"/>
    <property type="evidence" value="ECO:0000318"/>
    <property type="project" value="GO_Central"/>
</dbReference>
<dbReference type="CDD" id="cd01398">
    <property type="entry name" value="RPI_A"/>
    <property type="match status" value="1"/>
</dbReference>
<dbReference type="FunFam" id="3.30.70.260:FF:000004">
    <property type="entry name" value="Ribose-5-phosphate isomerase A"/>
    <property type="match status" value="1"/>
</dbReference>
<dbReference type="FunFam" id="3.40.50.1360:FF:000001">
    <property type="entry name" value="Ribose-5-phosphate isomerase A"/>
    <property type="match status" value="1"/>
</dbReference>
<dbReference type="Gene3D" id="3.30.70.260">
    <property type="match status" value="1"/>
</dbReference>
<dbReference type="Gene3D" id="3.40.50.1360">
    <property type="match status" value="1"/>
</dbReference>
<dbReference type="HAMAP" id="MF_00170">
    <property type="entry name" value="Rib_5P_isom_A"/>
    <property type="match status" value="1"/>
</dbReference>
<dbReference type="InterPro" id="IPR037171">
    <property type="entry name" value="NagB/RpiA_transferase-like"/>
</dbReference>
<dbReference type="InterPro" id="IPR020672">
    <property type="entry name" value="Ribose5P_isomerase_typA_subgr"/>
</dbReference>
<dbReference type="InterPro" id="IPR004788">
    <property type="entry name" value="Ribose5P_isomerase_type_A"/>
</dbReference>
<dbReference type="NCBIfam" id="NF001924">
    <property type="entry name" value="PRK00702.1"/>
    <property type="match status" value="1"/>
</dbReference>
<dbReference type="NCBIfam" id="TIGR00021">
    <property type="entry name" value="rpiA"/>
    <property type="match status" value="1"/>
</dbReference>
<dbReference type="PANTHER" id="PTHR11934">
    <property type="entry name" value="RIBOSE-5-PHOSPHATE ISOMERASE"/>
    <property type="match status" value="1"/>
</dbReference>
<dbReference type="PANTHER" id="PTHR11934:SF0">
    <property type="entry name" value="RIBOSE-5-PHOSPHATE ISOMERASE"/>
    <property type="match status" value="1"/>
</dbReference>
<dbReference type="Pfam" id="PF06026">
    <property type="entry name" value="Rib_5-P_isom_A"/>
    <property type="match status" value="1"/>
</dbReference>
<dbReference type="SUPFAM" id="SSF75445">
    <property type="entry name" value="D-ribose-5-phosphate isomerase (RpiA), lid domain"/>
    <property type="match status" value="1"/>
</dbReference>
<dbReference type="SUPFAM" id="SSF100950">
    <property type="entry name" value="NagB/RpiA/CoA transferase-like"/>
    <property type="match status" value="1"/>
</dbReference>
<name>RPIA_HAEIN</name>
<comment type="function">
    <text evidence="1">Catalyzes the reversible conversion of ribose-5-phosphate to ribulose 5-phosphate.</text>
</comment>
<comment type="catalytic activity">
    <reaction evidence="1">
        <text>aldehydo-D-ribose 5-phosphate = D-ribulose 5-phosphate</text>
        <dbReference type="Rhea" id="RHEA:14657"/>
        <dbReference type="ChEBI" id="CHEBI:58121"/>
        <dbReference type="ChEBI" id="CHEBI:58273"/>
        <dbReference type="EC" id="5.3.1.6"/>
    </reaction>
</comment>
<comment type="pathway">
    <text evidence="1">Carbohydrate degradation; pentose phosphate pathway; D-ribose 5-phosphate from D-ribulose 5-phosphate (non-oxidative stage): step 1/1.</text>
</comment>
<comment type="subunit">
    <text evidence="1 2">Homodimer.</text>
</comment>
<comment type="similarity">
    <text evidence="1">Belongs to the ribose 5-phosphate isomerase family.</text>
</comment>
<proteinExistence type="evidence at protein level"/>
<feature type="chain" id="PRO_0000158423" description="Ribose-5-phosphate isomerase A">
    <location>
        <begin position="1"/>
        <end position="219"/>
    </location>
</feature>
<feature type="active site" description="Proton acceptor" evidence="1">
    <location>
        <position position="103"/>
    </location>
</feature>
<feature type="binding site">
    <location>
        <begin position="28"/>
        <end position="31"/>
    </location>
    <ligand>
        <name>substrate</name>
    </ligand>
</feature>
<feature type="binding site" evidence="3">
    <location>
        <begin position="81"/>
        <end position="84"/>
    </location>
    <ligand>
        <name>substrate</name>
    </ligand>
</feature>
<feature type="binding site">
    <location>
        <begin position="94"/>
        <end position="97"/>
    </location>
    <ligand>
        <name>substrate</name>
    </ligand>
</feature>
<feature type="binding site" evidence="1">
    <location>
        <position position="121"/>
    </location>
    <ligand>
        <name>substrate</name>
    </ligand>
</feature>
<feature type="helix" evidence="4">
    <location>
        <begin position="3"/>
        <end position="14"/>
    </location>
</feature>
<feature type="helix" evidence="4">
    <location>
        <begin position="15"/>
        <end position="17"/>
    </location>
</feature>
<feature type="strand" evidence="4">
    <location>
        <begin position="22"/>
        <end position="26"/>
    </location>
</feature>
<feature type="helix" evidence="4">
    <location>
        <begin position="30"/>
        <end position="40"/>
    </location>
</feature>
<feature type="helix" evidence="4">
    <location>
        <begin position="41"/>
        <end position="45"/>
    </location>
</feature>
<feature type="strand" evidence="4">
    <location>
        <begin position="48"/>
        <end position="53"/>
    </location>
</feature>
<feature type="helix" evidence="4">
    <location>
        <begin position="54"/>
        <end position="62"/>
    </location>
</feature>
<feature type="helix" evidence="4">
    <location>
        <begin position="70"/>
        <end position="72"/>
    </location>
</feature>
<feature type="strand" evidence="4">
    <location>
        <begin position="76"/>
        <end position="81"/>
    </location>
</feature>
<feature type="strand" evidence="4">
    <location>
        <begin position="84"/>
        <end position="86"/>
    </location>
</feature>
<feature type="helix" evidence="4">
    <location>
        <begin position="100"/>
        <end position="109"/>
    </location>
</feature>
<feature type="strand" evidence="4">
    <location>
        <begin position="110"/>
        <end position="118"/>
    </location>
</feature>
<feature type="helix" evidence="4">
    <location>
        <begin position="119"/>
        <end position="121"/>
    </location>
</feature>
<feature type="strand" evidence="4">
    <location>
        <begin position="128"/>
        <end position="130"/>
    </location>
</feature>
<feature type="strand" evidence="4">
    <location>
        <begin position="132"/>
        <end position="136"/>
    </location>
</feature>
<feature type="helix" evidence="4">
    <location>
        <begin position="138"/>
        <end position="140"/>
    </location>
</feature>
<feature type="helix" evidence="4">
    <location>
        <begin position="141"/>
        <end position="150"/>
    </location>
</feature>
<feature type="strand" evidence="4">
    <location>
        <begin position="154"/>
        <end position="157"/>
    </location>
</feature>
<feature type="strand" evidence="4">
    <location>
        <begin position="168"/>
        <end position="174"/>
    </location>
</feature>
<feature type="helix" evidence="4">
    <location>
        <begin position="180"/>
        <end position="188"/>
    </location>
</feature>
<feature type="strand" evidence="4">
    <location>
        <begin position="193"/>
        <end position="199"/>
    </location>
</feature>
<feature type="strand" evidence="4">
    <location>
        <begin position="205"/>
        <end position="211"/>
    </location>
</feature>
<feature type="strand" evidence="4">
    <location>
        <begin position="214"/>
        <end position="218"/>
    </location>
</feature>
<protein>
    <recommendedName>
        <fullName evidence="1">Ribose-5-phosphate isomerase A</fullName>
        <ecNumber evidence="1">5.3.1.6</ecNumber>
    </recommendedName>
    <alternativeName>
        <fullName evidence="1">Phosphoriboisomerase A</fullName>
        <shortName evidence="1">PRI</shortName>
    </alternativeName>
</protein>